<name>RUS2_ACIFI</name>
<accession>P0C918</accession>
<accession>P24930</accession>
<accession>P74919</accession>
<accession>Q56297</accession>
<accession>Q56298</accession>
<evidence type="ECO:0000250" key="1"/>
<evidence type="ECO:0000269" key="2">
    <source>
    </source>
</evidence>
<evidence type="ECO:0000305" key="3"/>
<evidence type="ECO:0007829" key="4">
    <source>
        <dbReference type="PDB" id="2CAL"/>
    </source>
</evidence>
<feature type="signal peptide" evidence="1">
    <location>
        <begin position="1"/>
        <end position="32"/>
    </location>
</feature>
<feature type="chain" id="PRO_0000002872" description="Rusticyanin">
    <location>
        <begin position="33"/>
        <end position="187"/>
    </location>
</feature>
<feature type="domain" description="Plastocyanin-like">
    <location>
        <begin position="85"/>
        <end position="187"/>
    </location>
</feature>
<feature type="binding site">
    <location>
        <position position="117"/>
    </location>
    <ligand>
        <name>Cu cation</name>
        <dbReference type="ChEBI" id="CHEBI:23378"/>
    </ligand>
</feature>
<feature type="binding site">
    <location>
        <position position="170"/>
    </location>
    <ligand>
        <name>Cu cation</name>
        <dbReference type="ChEBI" id="CHEBI:23378"/>
    </ligand>
</feature>
<feature type="binding site">
    <location>
        <position position="175"/>
    </location>
    <ligand>
        <name>Cu cation</name>
        <dbReference type="ChEBI" id="CHEBI:23378"/>
    </ligand>
</feature>
<feature type="binding site">
    <location>
        <position position="180"/>
    </location>
    <ligand>
        <name>Cu cation</name>
        <dbReference type="ChEBI" id="CHEBI:23378"/>
    </ligand>
</feature>
<feature type="strand" evidence="4">
    <location>
        <begin position="40"/>
        <end position="42"/>
    </location>
</feature>
<feature type="helix" evidence="4">
    <location>
        <begin position="44"/>
        <end position="51"/>
    </location>
</feature>
<feature type="strand" evidence="4">
    <location>
        <begin position="57"/>
        <end position="59"/>
    </location>
</feature>
<feature type="strand" evidence="4">
    <location>
        <begin position="62"/>
        <end position="64"/>
    </location>
</feature>
<feature type="strand" evidence="4">
    <location>
        <begin position="67"/>
        <end position="77"/>
    </location>
</feature>
<feature type="strand" evidence="4">
    <location>
        <begin position="86"/>
        <end position="88"/>
    </location>
</feature>
<feature type="strand" evidence="4">
    <location>
        <begin position="91"/>
        <end position="93"/>
    </location>
</feature>
<feature type="strand" evidence="4">
    <location>
        <begin position="95"/>
        <end position="99"/>
    </location>
</feature>
<feature type="strand" evidence="4">
    <location>
        <begin position="103"/>
        <end position="110"/>
    </location>
</feature>
<feature type="strand" evidence="4">
    <location>
        <begin position="120"/>
        <end position="123"/>
    </location>
</feature>
<feature type="strand" evidence="4">
    <location>
        <begin position="139"/>
        <end position="141"/>
    </location>
</feature>
<feature type="strand" evidence="4">
    <location>
        <begin position="151"/>
        <end position="159"/>
    </location>
</feature>
<feature type="strand" evidence="4">
    <location>
        <begin position="163"/>
        <end position="169"/>
    </location>
</feature>
<feature type="turn" evidence="4">
    <location>
        <begin position="173"/>
        <end position="175"/>
    </location>
</feature>
<feature type="helix" evidence="4">
    <location>
        <begin position="176"/>
        <end position="178"/>
    </location>
</feature>
<feature type="strand" evidence="4">
    <location>
        <begin position="181"/>
        <end position="187"/>
    </location>
</feature>
<keyword id="KW-0002">3D-structure</keyword>
<keyword id="KW-0186">Copper</keyword>
<keyword id="KW-0249">Electron transport</keyword>
<keyword id="KW-0479">Metal-binding</keyword>
<keyword id="KW-0574">Periplasm</keyword>
<keyword id="KW-0732">Signal</keyword>
<keyword id="KW-0813">Transport</keyword>
<gene>
    <name type="primary">rus</name>
    <name type="synonym">rusTA</name>
</gene>
<sequence>MYTQNTMKKNWYVTVGAAAALAATVGMGTAMAGTLDSTWKEATLPQVKAMLEKDTGKVSGDTVTYSGKTVHVVAAAVLPGFPFPSFEVHDKKNPTLEIPAGATVDVTFINTNKGFGHSFDITKKGPPYAVMPVIDPIVAGTGFSPVPKDGKFGYTDFTWHPTAGTYYYVCQIPGHAATGMFGKIIVK</sequence>
<protein>
    <recommendedName>
        <fullName>Rusticyanin</fullName>
    </recommendedName>
</protein>
<dbReference type="EMBL" id="AJ006456">
    <property type="protein sequence ID" value="CAA07038.1"/>
    <property type="molecule type" value="Genomic_DNA"/>
</dbReference>
<dbReference type="RefSeq" id="WP_126604698.1">
    <property type="nucleotide sequence ID" value="NZ_AP018795.1"/>
</dbReference>
<dbReference type="PDB" id="1A3Z">
    <property type="method" value="X-ray"/>
    <property type="resolution" value="1.90 A"/>
    <property type="chains" value="A=33-187"/>
</dbReference>
<dbReference type="PDB" id="1A8Z">
    <property type="method" value="X-ray"/>
    <property type="resolution" value="2.10 A"/>
    <property type="chains" value="A=39-187"/>
</dbReference>
<dbReference type="PDB" id="1CUR">
    <property type="method" value="NMR"/>
    <property type="chains" value="A=38-187"/>
</dbReference>
<dbReference type="PDB" id="1E30">
    <property type="method" value="X-ray"/>
    <property type="resolution" value="1.50 A"/>
    <property type="chains" value="A/B=38-187"/>
</dbReference>
<dbReference type="PDB" id="1GY1">
    <property type="method" value="X-ray"/>
    <property type="resolution" value="1.65 A"/>
    <property type="chains" value="A/B=38-187"/>
</dbReference>
<dbReference type="PDB" id="1GY2">
    <property type="method" value="X-ray"/>
    <property type="resolution" value="1.82 A"/>
    <property type="chains" value="A/B=38-187"/>
</dbReference>
<dbReference type="PDB" id="1RCY">
    <property type="method" value="X-ray"/>
    <property type="resolution" value="1.90 A"/>
    <property type="chains" value="A=38-187"/>
</dbReference>
<dbReference type="PDB" id="2CAK">
    <property type="method" value="X-ray"/>
    <property type="resolution" value="1.27 A"/>
    <property type="chains" value="A=38-187"/>
</dbReference>
<dbReference type="PDB" id="2CAL">
    <property type="method" value="X-ray"/>
    <property type="resolution" value="1.10 A"/>
    <property type="chains" value="A=38-187"/>
</dbReference>
<dbReference type="PDBsum" id="1A3Z"/>
<dbReference type="PDBsum" id="1A8Z"/>
<dbReference type="PDBsum" id="1CUR"/>
<dbReference type="PDBsum" id="1E30"/>
<dbReference type="PDBsum" id="1GY1"/>
<dbReference type="PDBsum" id="1GY2"/>
<dbReference type="PDBsum" id="1RCY"/>
<dbReference type="PDBsum" id="2CAK"/>
<dbReference type="PDBsum" id="2CAL"/>
<dbReference type="SMR" id="P0C918"/>
<dbReference type="BioCyc" id="MetaCyc:MONOMER-16161"/>
<dbReference type="EvolutionaryTrace" id="P0C918"/>
<dbReference type="GO" id="GO:0042597">
    <property type="term" value="C:periplasmic space"/>
    <property type="evidence" value="ECO:0007669"/>
    <property type="project" value="UniProtKB-SubCell"/>
</dbReference>
<dbReference type="GO" id="GO:0005507">
    <property type="term" value="F:copper ion binding"/>
    <property type="evidence" value="ECO:0007669"/>
    <property type="project" value="InterPro"/>
</dbReference>
<dbReference type="GO" id="GO:0009055">
    <property type="term" value="F:electron transfer activity"/>
    <property type="evidence" value="ECO:0007669"/>
    <property type="project" value="InterPro"/>
</dbReference>
<dbReference type="CDD" id="cd04231">
    <property type="entry name" value="Rusticyanin"/>
    <property type="match status" value="1"/>
</dbReference>
<dbReference type="Gene3D" id="2.60.40.420">
    <property type="entry name" value="Cupredoxins - blue copper proteins"/>
    <property type="match status" value="1"/>
</dbReference>
<dbReference type="InterPro" id="IPR000923">
    <property type="entry name" value="BlueCu_1"/>
</dbReference>
<dbReference type="InterPro" id="IPR028871">
    <property type="entry name" value="BlueCu_1_BS"/>
</dbReference>
<dbReference type="InterPro" id="IPR033138">
    <property type="entry name" value="Cu_oxidase_CS"/>
</dbReference>
<dbReference type="InterPro" id="IPR008972">
    <property type="entry name" value="Cupredoxin"/>
</dbReference>
<dbReference type="InterPro" id="IPR001243">
    <property type="entry name" value="Rusticyanin"/>
</dbReference>
<dbReference type="NCBIfam" id="TIGR03095">
    <property type="entry name" value="rusti_cyanin"/>
    <property type="match status" value="1"/>
</dbReference>
<dbReference type="Pfam" id="PF00127">
    <property type="entry name" value="Copper-bind"/>
    <property type="match status" value="1"/>
</dbReference>
<dbReference type="PRINTS" id="PR00158">
    <property type="entry name" value="RUSTICYANIN"/>
</dbReference>
<dbReference type="SUPFAM" id="SSF49503">
    <property type="entry name" value="Cupredoxins"/>
    <property type="match status" value="1"/>
</dbReference>
<dbReference type="PROSITE" id="PS00196">
    <property type="entry name" value="COPPER_BLUE"/>
    <property type="match status" value="1"/>
</dbReference>
<dbReference type="PROSITE" id="PS00079">
    <property type="entry name" value="MULTICOPPER_OXIDASE1"/>
    <property type="match status" value="1"/>
</dbReference>
<proteinExistence type="evidence at protein level"/>
<comment type="function">
    <text>Electron carrier from cytochrome c552 to the A-type oxidase.</text>
</comment>
<comment type="cofactor">
    <cofactor>
        <name>Cu cation</name>
        <dbReference type="ChEBI" id="CHEBI:23378"/>
    </cofactor>
    <text>Binds 1 copper ion per subunit.</text>
</comment>
<comment type="biophysicochemical properties">
    <redoxPotential>
        <text>E(0) is +680 mV.</text>
    </redoxPotential>
</comment>
<comment type="subunit">
    <text>Monomer.</text>
</comment>
<comment type="subcellular location">
    <subcellularLocation>
        <location>Periplasm</location>
    </subcellularLocation>
</comment>
<comment type="induction">
    <text evidence="2">Expressed during growth on Fe(2+), sulfur and thiosulfate.</text>
</comment>
<comment type="caution">
    <text evidence="3">The two different versions of rusticyanins are most probably due to strain variations.</text>
</comment>
<reference key="1">
    <citation type="journal article" date="1998" name="Biochim. Biophys. Acta">
        <title>Sequence and expression of the rusticyanin structural gene from Thiobacillus ferrooxidans ATCC33020 strain.</title>
        <authorList>
            <person name="Bengrine A."/>
            <person name="Guiliani N."/>
            <person name="Appia-Ayme C."/>
            <person name="Jedlicki E."/>
            <person name="Holmes D.S."/>
            <person name="Chippaux M."/>
            <person name="Bonnefoy V."/>
        </authorList>
    </citation>
    <scope>NUCLEOTIDE SEQUENCE [GENOMIC DNA]</scope>
    <scope>INDUCTION</scope>
    <source>
        <strain>ATCC 33020 / DSM 29468 / JCM 18981 / 11Fe</strain>
    </source>
</reference>
<reference key="2">
    <citation type="journal article" date="1996" name="J. Mol. Biol.">
        <title>Multiple wavelength anomalous diffraction (MAD) crystal structure of rusticyanin: a highly oxidizing cupredoxin with extreme acid stability.</title>
        <authorList>
            <person name="Walter R.L."/>
            <person name="Ealick S.E."/>
            <person name="Friedman A.M."/>
            <person name="Blake R.C. II"/>
            <person name="Proctor P."/>
            <person name="Shoham M."/>
        </authorList>
    </citation>
    <scope>X-RAY CRYSTALLOGRAPHY (1.9 ANGSTROMS)</scope>
</reference>
<reference key="3">
    <citation type="submission" date="1998-01" db="PDB data bank">
        <authorList>
            <person name="Zhao D."/>
            <person name="Shoham M."/>
        </authorList>
    </citation>
    <scope>X-RAY CRYSTALLOGRAPHY (1.9 ANGSTROMS)</scope>
</reference>
<reference key="4">
    <citation type="journal article" date="1998" name="Acta Crystallogr. D">
        <title>Structure determination of a 16.8 kDa copper protein at 2.1-A resolution using anomalous scattering data with direct methods.</title>
        <authorList>
            <person name="Harvey I."/>
            <person name="Hao Q."/>
            <person name="Duke E.M."/>
            <person name="Ingledew W.J."/>
            <person name="Hasnain S.S."/>
        </authorList>
    </citation>
    <scope>X-RAY CRYSTALLOGRAPHY (2.1 ANGSTROMS)</scope>
</reference>
<reference key="5">
    <citation type="journal article" date="1996" name="J. Mol. Biol.">
        <title>NMR solution structure of Cu(I) rusticyanin from Thiobacillus ferrooxidans: structural basis for the extreme acid stability and redox potential.</title>
        <authorList>
            <person name="Botuyan M.V."/>
            <person name="Toy-Palmer A."/>
            <person name="Chung J."/>
            <person name="Blake R.C. II"/>
            <person name="Beroza P."/>
            <person name="Case D.A."/>
            <person name="Dyson H.J."/>
        </authorList>
    </citation>
    <scope>STRUCTURE BY NMR</scope>
</reference>
<organism>
    <name type="scientific">Acidithiobacillus ferridurans</name>
    <dbReference type="NCBI Taxonomy" id="1232575"/>
    <lineage>
        <taxon>Bacteria</taxon>
        <taxon>Pseudomonadati</taxon>
        <taxon>Pseudomonadota</taxon>
        <taxon>Acidithiobacillia</taxon>
        <taxon>Acidithiobacillales</taxon>
        <taxon>Acidithiobacillaceae</taxon>
        <taxon>Acidithiobacillus</taxon>
    </lineage>
</organism>